<comment type="function">
    <text evidence="4">Promotes cell proliferation.</text>
</comment>
<comment type="interaction">
    <interactant intactId="EBI-2877737">
        <id>Q6ZVX7</id>
    </interactant>
    <interactant intactId="EBI-748248">
        <id>Q8WTU0</id>
        <label>DDI1</label>
    </interactant>
    <organismsDiffer>false</organismsDiffer>
    <experiments>3</experiments>
</comment>
<comment type="subcellular location">
    <subcellularLocation>
        <location evidence="4">Cytoplasm</location>
    </subcellularLocation>
</comment>
<comment type="tissue specificity">
    <text evidence="4">Expressed in the esophagus, oral cavity, skin, tongue and reproductive organs.</text>
</comment>
<gene>
    <name type="primary">NCCRP1</name>
    <name type="synonym">FBXO50</name>
</gene>
<name>FBX50_HUMAN</name>
<accession>Q6ZVX7</accession>
<accession>Q6NVV5</accession>
<organism>
    <name type="scientific">Homo sapiens</name>
    <name type="common">Human</name>
    <dbReference type="NCBI Taxonomy" id="9606"/>
    <lineage>
        <taxon>Eukaryota</taxon>
        <taxon>Metazoa</taxon>
        <taxon>Chordata</taxon>
        <taxon>Craniata</taxon>
        <taxon>Vertebrata</taxon>
        <taxon>Euteleostomi</taxon>
        <taxon>Mammalia</taxon>
        <taxon>Eutheria</taxon>
        <taxon>Euarchontoglires</taxon>
        <taxon>Primates</taxon>
        <taxon>Haplorrhini</taxon>
        <taxon>Catarrhini</taxon>
        <taxon>Hominidae</taxon>
        <taxon>Homo</taxon>
    </lineage>
</organism>
<reference key="1">
    <citation type="journal article" date="2004" name="Nat. Genet.">
        <title>Complete sequencing and characterization of 21,243 full-length human cDNAs.</title>
        <authorList>
            <person name="Ota T."/>
            <person name="Suzuki Y."/>
            <person name="Nishikawa T."/>
            <person name="Otsuki T."/>
            <person name="Sugiyama T."/>
            <person name="Irie R."/>
            <person name="Wakamatsu A."/>
            <person name="Hayashi K."/>
            <person name="Sato H."/>
            <person name="Nagai K."/>
            <person name="Kimura K."/>
            <person name="Makita H."/>
            <person name="Sekine M."/>
            <person name="Obayashi M."/>
            <person name="Nishi T."/>
            <person name="Shibahara T."/>
            <person name="Tanaka T."/>
            <person name="Ishii S."/>
            <person name="Yamamoto J."/>
            <person name="Saito K."/>
            <person name="Kawai Y."/>
            <person name="Isono Y."/>
            <person name="Nakamura Y."/>
            <person name="Nagahari K."/>
            <person name="Murakami K."/>
            <person name="Yasuda T."/>
            <person name="Iwayanagi T."/>
            <person name="Wagatsuma M."/>
            <person name="Shiratori A."/>
            <person name="Sudo H."/>
            <person name="Hosoiri T."/>
            <person name="Kaku Y."/>
            <person name="Kodaira H."/>
            <person name="Kondo H."/>
            <person name="Sugawara M."/>
            <person name="Takahashi M."/>
            <person name="Kanda K."/>
            <person name="Yokoi T."/>
            <person name="Furuya T."/>
            <person name="Kikkawa E."/>
            <person name="Omura Y."/>
            <person name="Abe K."/>
            <person name="Kamihara K."/>
            <person name="Katsuta N."/>
            <person name="Sato K."/>
            <person name="Tanikawa M."/>
            <person name="Yamazaki M."/>
            <person name="Ninomiya K."/>
            <person name="Ishibashi T."/>
            <person name="Yamashita H."/>
            <person name="Murakawa K."/>
            <person name="Fujimori K."/>
            <person name="Tanai H."/>
            <person name="Kimata M."/>
            <person name="Watanabe M."/>
            <person name="Hiraoka S."/>
            <person name="Chiba Y."/>
            <person name="Ishida S."/>
            <person name="Ono Y."/>
            <person name="Takiguchi S."/>
            <person name="Watanabe S."/>
            <person name="Yosida M."/>
            <person name="Hotuta T."/>
            <person name="Kusano J."/>
            <person name="Kanehori K."/>
            <person name="Takahashi-Fujii A."/>
            <person name="Hara H."/>
            <person name="Tanase T.-O."/>
            <person name="Nomura Y."/>
            <person name="Togiya S."/>
            <person name="Komai F."/>
            <person name="Hara R."/>
            <person name="Takeuchi K."/>
            <person name="Arita M."/>
            <person name="Imose N."/>
            <person name="Musashino K."/>
            <person name="Yuuki H."/>
            <person name="Oshima A."/>
            <person name="Sasaki N."/>
            <person name="Aotsuka S."/>
            <person name="Yoshikawa Y."/>
            <person name="Matsunawa H."/>
            <person name="Ichihara T."/>
            <person name="Shiohata N."/>
            <person name="Sano S."/>
            <person name="Moriya S."/>
            <person name="Momiyama H."/>
            <person name="Satoh N."/>
            <person name="Takami S."/>
            <person name="Terashima Y."/>
            <person name="Suzuki O."/>
            <person name="Nakagawa S."/>
            <person name="Senoh A."/>
            <person name="Mizoguchi H."/>
            <person name="Goto Y."/>
            <person name="Shimizu F."/>
            <person name="Wakebe H."/>
            <person name="Hishigaki H."/>
            <person name="Watanabe T."/>
            <person name="Sugiyama A."/>
            <person name="Takemoto M."/>
            <person name="Kawakami B."/>
            <person name="Yamazaki M."/>
            <person name="Watanabe K."/>
            <person name="Kumagai A."/>
            <person name="Itakura S."/>
            <person name="Fukuzumi Y."/>
            <person name="Fujimori Y."/>
            <person name="Komiyama M."/>
            <person name="Tashiro H."/>
            <person name="Tanigami A."/>
            <person name="Fujiwara T."/>
            <person name="Ono T."/>
            <person name="Yamada K."/>
            <person name="Fujii Y."/>
            <person name="Ozaki K."/>
            <person name="Hirao M."/>
            <person name="Ohmori Y."/>
            <person name="Kawabata A."/>
            <person name="Hikiji T."/>
            <person name="Kobatake N."/>
            <person name="Inagaki H."/>
            <person name="Ikema Y."/>
            <person name="Okamoto S."/>
            <person name="Okitani R."/>
            <person name="Kawakami T."/>
            <person name="Noguchi S."/>
            <person name="Itoh T."/>
            <person name="Shigeta K."/>
            <person name="Senba T."/>
            <person name="Matsumura K."/>
            <person name="Nakajima Y."/>
            <person name="Mizuno T."/>
            <person name="Morinaga M."/>
            <person name="Sasaki M."/>
            <person name="Togashi T."/>
            <person name="Oyama M."/>
            <person name="Hata H."/>
            <person name="Watanabe M."/>
            <person name="Komatsu T."/>
            <person name="Mizushima-Sugano J."/>
            <person name="Satoh T."/>
            <person name="Shirai Y."/>
            <person name="Takahashi Y."/>
            <person name="Nakagawa K."/>
            <person name="Okumura K."/>
            <person name="Nagase T."/>
            <person name="Nomura N."/>
            <person name="Kikuchi H."/>
            <person name="Masuho Y."/>
            <person name="Yamashita R."/>
            <person name="Nakai K."/>
            <person name="Yada T."/>
            <person name="Nakamura Y."/>
            <person name="Ohara O."/>
            <person name="Isogai T."/>
            <person name="Sugano S."/>
        </authorList>
    </citation>
    <scope>NUCLEOTIDE SEQUENCE [LARGE SCALE MRNA]</scope>
    <source>
        <tissue>Placenta</tissue>
    </source>
</reference>
<reference key="2">
    <citation type="journal article" date="2004" name="Nature">
        <title>The DNA sequence and biology of human chromosome 19.</title>
        <authorList>
            <person name="Grimwood J."/>
            <person name="Gordon L.A."/>
            <person name="Olsen A.S."/>
            <person name="Terry A."/>
            <person name="Schmutz J."/>
            <person name="Lamerdin J.E."/>
            <person name="Hellsten U."/>
            <person name="Goodstein D."/>
            <person name="Couronne O."/>
            <person name="Tran-Gyamfi M."/>
            <person name="Aerts A."/>
            <person name="Altherr M."/>
            <person name="Ashworth L."/>
            <person name="Bajorek E."/>
            <person name="Black S."/>
            <person name="Branscomb E."/>
            <person name="Caenepeel S."/>
            <person name="Carrano A.V."/>
            <person name="Caoile C."/>
            <person name="Chan Y.M."/>
            <person name="Christensen M."/>
            <person name="Cleland C.A."/>
            <person name="Copeland A."/>
            <person name="Dalin E."/>
            <person name="Dehal P."/>
            <person name="Denys M."/>
            <person name="Detter J.C."/>
            <person name="Escobar J."/>
            <person name="Flowers D."/>
            <person name="Fotopulos D."/>
            <person name="Garcia C."/>
            <person name="Georgescu A.M."/>
            <person name="Glavina T."/>
            <person name="Gomez M."/>
            <person name="Gonzales E."/>
            <person name="Groza M."/>
            <person name="Hammon N."/>
            <person name="Hawkins T."/>
            <person name="Haydu L."/>
            <person name="Ho I."/>
            <person name="Huang W."/>
            <person name="Israni S."/>
            <person name="Jett J."/>
            <person name="Kadner K."/>
            <person name="Kimball H."/>
            <person name="Kobayashi A."/>
            <person name="Larionov V."/>
            <person name="Leem S.-H."/>
            <person name="Lopez F."/>
            <person name="Lou Y."/>
            <person name="Lowry S."/>
            <person name="Malfatti S."/>
            <person name="Martinez D."/>
            <person name="McCready P.M."/>
            <person name="Medina C."/>
            <person name="Morgan J."/>
            <person name="Nelson K."/>
            <person name="Nolan M."/>
            <person name="Ovcharenko I."/>
            <person name="Pitluck S."/>
            <person name="Pollard M."/>
            <person name="Popkie A.P."/>
            <person name="Predki P."/>
            <person name="Quan G."/>
            <person name="Ramirez L."/>
            <person name="Rash S."/>
            <person name="Retterer J."/>
            <person name="Rodriguez A."/>
            <person name="Rogers S."/>
            <person name="Salamov A."/>
            <person name="Salazar A."/>
            <person name="She X."/>
            <person name="Smith D."/>
            <person name="Slezak T."/>
            <person name="Solovyev V."/>
            <person name="Thayer N."/>
            <person name="Tice H."/>
            <person name="Tsai M."/>
            <person name="Ustaszewska A."/>
            <person name="Vo N."/>
            <person name="Wagner M."/>
            <person name="Wheeler J."/>
            <person name="Wu K."/>
            <person name="Xie G."/>
            <person name="Yang J."/>
            <person name="Dubchak I."/>
            <person name="Furey T.S."/>
            <person name="DeJong P."/>
            <person name="Dickson M."/>
            <person name="Gordon D."/>
            <person name="Eichler E.E."/>
            <person name="Pennacchio L.A."/>
            <person name="Richardson P."/>
            <person name="Stubbs L."/>
            <person name="Rokhsar D.S."/>
            <person name="Myers R.M."/>
            <person name="Rubin E.M."/>
            <person name="Lucas S.M."/>
        </authorList>
    </citation>
    <scope>NUCLEOTIDE SEQUENCE [LARGE SCALE GENOMIC DNA]</scope>
</reference>
<reference key="3">
    <citation type="journal article" date="2004" name="Genome Res.">
        <title>The status, quality, and expansion of the NIH full-length cDNA project: the Mammalian Gene Collection (MGC).</title>
        <authorList>
            <consortium name="The MGC Project Team"/>
        </authorList>
    </citation>
    <scope>NUCLEOTIDE SEQUENCE [LARGE SCALE MRNA]</scope>
    <source>
        <tissue>Placenta</tissue>
    </source>
</reference>
<reference key="4">
    <citation type="journal article" date="2011" name="PLoS ONE">
        <title>Characterization of non-specific cytotoxic cell receptor protein 1: a new member of the lectin-type subfamily of F-box proteins.</title>
        <authorList>
            <person name="Kallio H."/>
            <person name="Tolvanen M."/>
            <person name="Janis J."/>
            <person name="Pan P.W."/>
            <person name="Laurila E."/>
            <person name="Kallioniemi A."/>
            <person name="Kilpinen S."/>
            <person name="Tuominen V.J."/>
            <person name="Isola J."/>
            <person name="Valjakka J."/>
            <person name="Pastorekova S."/>
            <person name="Pastorek J."/>
            <person name="Parkkila S."/>
        </authorList>
    </citation>
    <scope>FUNCTION</scope>
    <scope>SUBCELLULAR LOCATION</scope>
    <scope>TISSUE SPECIFICITY</scope>
    <scope>IDENTIFICATION BY MASS SPECTROMETRY</scope>
</reference>
<evidence type="ECO:0000250" key="1">
    <source>
        <dbReference type="UniProtKB" id="G3X9C2"/>
    </source>
</evidence>
<evidence type="ECO:0000255" key="2">
    <source>
        <dbReference type="PROSITE-ProRule" id="PRU00482"/>
    </source>
</evidence>
<evidence type="ECO:0000256" key="3">
    <source>
        <dbReference type="SAM" id="MobiDB-lite"/>
    </source>
</evidence>
<evidence type="ECO:0000269" key="4">
    <source>
    </source>
</evidence>
<proteinExistence type="evidence at protein level"/>
<sequence>MEEVREGHALGGGMEADGPASLQELPPSPRSPSPPPSPPPLPSPPSLPSPAAPEAPELPEPAQPSEAHARQLLLEEWGPLSGGLELPQRLTWKLLLLRRPLYRNLLRSPNPEGINIYEPAPPTGPTQRPLETLGNFRGWYIRTEKLQQNQSWTVKQQCVDLLAEGLWEELLDDEQPAITVMDWFEDSRLDACVYELHVWLLAADRRTVIAQHHVAPRTSGRGPPGRWVQVSHVFRHYGPGVRFIHFLHKAKNRMEPGGLRRTRVTDSSVSVQLRE</sequence>
<feature type="chain" id="PRO_0000326028" description="F-box only protein 50">
    <location>
        <begin position="1"/>
        <end position="275"/>
    </location>
</feature>
<feature type="domain" description="FBA" evidence="2">
    <location>
        <begin position="95"/>
        <end position="273"/>
    </location>
</feature>
<feature type="region of interest" description="Disordered" evidence="3">
    <location>
        <begin position="1"/>
        <end position="67"/>
    </location>
</feature>
<feature type="compositionally biased region" description="Pro residues" evidence="3">
    <location>
        <begin position="26"/>
        <end position="62"/>
    </location>
</feature>
<feature type="modified residue" description="Phosphoserine" evidence="1">
    <location>
        <position position="31"/>
    </location>
</feature>
<feature type="modified residue" description="Phosphoserine" evidence="1">
    <location>
        <position position="37"/>
    </location>
</feature>
<feature type="modified residue" description="Phosphoserine" evidence="1">
    <location>
        <position position="49"/>
    </location>
</feature>
<dbReference type="EMBL" id="AK123941">
    <property type="protein sequence ID" value="BAC85732.1"/>
    <property type="molecule type" value="mRNA"/>
</dbReference>
<dbReference type="EMBL" id="AC011443">
    <property type="status" value="NOT_ANNOTATED_CDS"/>
    <property type="molecule type" value="Genomic_DNA"/>
</dbReference>
<dbReference type="EMBL" id="BC067874">
    <property type="protein sequence ID" value="AAH67874.2"/>
    <property type="molecule type" value="mRNA"/>
</dbReference>
<dbReference type="EMBL" id="BC092493">
    <property type="protein sequence ID" value="AAH92493.1"/>
    <property type="molecule type" value="mRNA"/>
</dbReference>
<dbReference type="CCDS" id="CCDS12529.1"/>
<dbReference type="RefSeq" id="NP_001001414.1">
    <property type="nucleotide sequence ID" value="NM_001001414.2"/>
</dbReference>
<dbReference type="SMR" id="Q6ZVX7"/>
<dbReference type="BioGRID" id="131204">
    <property type="interactions" value="131"/>
</dbReference>
<dbReference type="FunCoup" id="Q6ZVX7">
    <property type="interactions" value="326"/>
</dbReference>
<dbReference type="IntAct" id="Q6ZVX7">
    <property type="interactions" value="83"/>
</dbReference>
<dbReference type="MINT" id="Q6ZVX7"/>
<dbReference type="STRING" id="9606.ENSP00000342137"/>
<dbReference type="GlyGen" id="Q6ZVX7">
    <property type="glycosylation" value="2 sites, 1 O-linked glycan (1 site)"/>
</dbReference>
<dbReference type="iPTMnet" id="Q6ZVX7"/>
<dbReference type="PhosphoSitePlus" id="Q6ZVX7"/>
<dbReference type="BioMuta" id="NCCRP1"/>
<dbReference type="DMDM" id="74738333"/>
<dbReference type="jPOST" id="Q6ZVX7"/>
<dbReference type="MassIVE" id="Q6ZVX7"/>
<dbReference type="PaxDb" id="9606-ENSP00000342137"/>
<dbReference type="PeptideAtlas" id="Q6ZVX7"/>
<dbReference type="PRIDE" id="Q6ZVX7"/>
<dbReference type="ProteomicsDB" id="68447"/>
<dbReference type="Pumba" id="Q6ZVX7"/>
<dbReference type="Antibodypedia" id="45009">
    <property type="antibodies" value="69 antibodies from 16 providers"/>
</dbReference>
<dbReference type="DNASU" id="342897"/>
<dbReference type="Ensembl" id="ENST00000339852.5">
    <property type="protein sequence ID" value="ENSP00000342137.3"/>
    <property type="gene ID" value="ENSG00000188505.5"/>
</dbReference>
<dbReference type="GeneID" id="342897"/>
<dbReference type="KEGG" id="hsa:342897"/>
<dbReference type="MANE-Select" id="ENST00000339852.5">
    <property type="protein sequence ID" value="ENSP00000342137.3"/>
    <property type="RefSeq nucleotide sequence ID" value="NM_001001414.2"/>
    <property type="RefSeq protein sequence ID" value="NP_001001414.1"/>
</dbReference>
<dbReference type="UCSC" id="uc002okq.2">
    <property type="organism name" value="human"/>
</dbReference>
<dbReference type="AGR" id="HGNC:33739"/>
<dbReference type="CTD" id="342897"/>
<dbReference type="DisGeNET" id="342897"/>
<dbReference type="GeneCards" id="NCCRP1"/>
<dbReference type="HGNC" id="HGNC:33739">
    <property type="gene designation" value="NCCRP1"/>
</dbReference>
<dbReference type="HPA" id="ENSG00000188505">
    <property type="expression patterns" value="Tissue enhanced (esophagus, skin, vagina)"/>
</dbReference>
<dbReference type="MIM" id="615901">
    <property type="type" value="gene"/>
</dbReference>
<dbReference type="neXtProt" id="NX_Q6ZVX7"/>
<dbReference type="OpenTargets" id="ENSG00000188505"/>
<dbReference type="PharmGKB" id="PA164723566"/>
<dbReference type="VEuPathDB" id="HostDB:ENSG00000188505"/>
<dbReference type="eggNOG" id="KOG3248">
    <property type="taxonomic scope" value="Eukaryota"/>
</dbReference>
<dbReference type="GeneTree" id="ENSGT00940000161313"/>
<dbReference type="HOGENOM" id="CLU_068548_1_0_1"/>
<dbReference type="InParanoid" id="Q6ZVX7"/>
<dbReference type="OMA" id="DGDFSGW"/>
<dbReference type="OrthoDB" id="1107553at2759"/>
<dbReference type="PAN-GO" id="Q6ZVX7">
    <property type="GO annotations" value="6 GO annotations based on evolutionary models"/>
</dbReference>
<dbReference type="PhylomeDB" id="Q6ZVX7"/>
<dbReference type="TreeFam" id="TF320527"/>
<dbReference type="PathwayCommons" id="Q6ZVX7"/>
<dbReference type="SignaLink" id="Q6ZVX7"/>
<dbReference type="BioGRID-ORCS" id="342897">
    <property type="hits" value="16 hits in 1152 CRISPR screens"/>
</dbReference>
<dbReference type="GenomeRNAi" id="342897"/>
<dbReference type="Pharos" id="Q6ZVX7">
    <property type="development level" value="Tbio"/>
</dbReference>
<dbReference type="PRO" id="PR:Q6ZVX7"/>
<dbReference type="Proteomes" id="UP000005640">
    <property type="component" value="Chromosome 19"/>
</dbReference>
<dbReference type="RNAct" id="Q6ZVX7">
    <property type="molecule type" value="protein"/>
</dbReference>
<dbReference type="Bgee" id="ENSG00000188505">
    <property type="expression patterns" value="Expressed in lower esophagus mucosa and 82 other cell types or tissues"/>
</dbReference>
<dbReference type="GO" id="GO:0005737">
    <property type="term" value="C:cytoplasm"/>
    <property type="evidence" value="ECO:0000314"/>
    <property type="project" value="UniProtKB"/>
</dbReference>
<dbReference type="GO" id="GO:0005829">
    <property type="term" value="C:cytosol"/>
    <property type="evidence" value="ECO:0000314"/>
    <property type="project" value="HPA"/>
</dbReference>
<dbReference type="GO" id="GO:0070062">
    <property type="term" value="C:extracellular exosome"/>
    <property type="evidence" value="ECO:0007005"/>
    <property type="project" value="UniProtKB"/>
</dbReference>
<dbReference type="GO" id="GO:0019005">
    <property type="term" value="C:SCF ubiquitin ligase complex"/>
    <property type="evidence" value="ECO:0000318"/>
    <property type="project" value="GO_Central"/>
</dbReference>
<dbReference type="GO" id="GO:0036503">
    <property type="term" value="P:ERAD pathway"/>
    <property type="evidence" value="ECO:0000318"/>
    <property type="project" value="GO_Central"/>
</dbReference>
<dbReference type="GO" id="GO:0006516">
    <property type="term" value="P:glycoprotein catabolic process"/>
    <property type="evidence" value="ECO:0000318"/>
    <property type="project" value="GO_Central"/>
</dbReference>
<dbReference type="GO" id="GO:0008284">
    <property type="term" value="P:positive regulation of cell population proliferation"/>
    <property type="evidence" value="ECO:0000314"/>
    <property type="project" value="UniProtKB"/>
</dbReference>
<dbReference type="GO" id="GO:0031146">
    <property type="term" value="P:SCF-dependent proteasomal ubiquitin-dependent protein catabolic process"/>
    <property type="evidence" value="ECO:0000318"/>
    <property type="project" value="GO_Central"/>
</dbReference>
<dbReference type="FunFam" id="2.60.120.260:FF:000086">
    <property type="entry name" value="Non-specific cytotoxic cell receptor protein 1"/>
    <property type="match status" value="1"/>
</dbReference>
<dbReference type="Gene3D" id="2.60.120.260">
    <property type="entry name" value="Galactose-binding domain-like"/>
    <property type="match status" value="1"/>
</dbReference>
<dbReference type="InterPro" id="IPR007397">
    <property type="entry name" value="F-box-assoc_dom"/>
</dbReference>
<dbReference type="InterPro" id="IPR039752">
    <property type="entry name" value="F-box_only"/>
</dbReference>
<dbReference type="InterPro" id="IPR008979">
    <property type="entry name" value="Galactose-bd-like_sf"/>
</dbReference>
<dbReference type="PANTHER" id="PTHR12125:SF1">
    <property type="entry name" value="F-BOX ONLY PROTEIN 50"/>
    <property type="match status" value="1"/>
</dbReference>
<dbReference type="PANTHER" id="PTHR12125">
    <property type="entry name" value="F-BOX ONLY PROTEIN 6-LIKE PROTEIN"/>
    <property type="match status" value="1"/>
</dbReference>
<dbReference type="Pfam" id="PF04300">
    <property type="entry name" value="FBA"/>
    <property type="match status" value="1"/>
</dbReference>
<dbReference type="SMART" id="SM01198">
    <property type="entry name" value="FBA"/>
    <property type="match status" value="1"/>
</dbReference>
<dbReference type="SUPFAM" id="SSF49785">
    <property type="entry name" value="Galactose-binding domain-like"/>
    <property type="match status" value="1"/>
</dbReference>
<dbReference type="PROSITE" id="PS51114">
    <property type="entry name" value="FBA"/>
    <property type="match status" value="1"/>
</dbReference>
<protein>
    <recommendedName>
        <fullName>F-box only protein 50</fullName>
    </recommendedName>
    <alternativeName>
        <fullName>NCC receptor protein 1 homolog</fullName>
        <shortName>NCCRP-1</shortName>
    </alternativeName>
    <alternativeName>
        <fullName>Non-specific cytotoxic cell receptor protein 1 homolog</fullName>
    </alternativeName>
</protein>
<keyword id="KW-0963">Cytoplasm</keyword>
<keyword id="KW-0597">Phosphoprotein</keyword>
<keyword id="KW-1267">Proteomics identification</keyword>
<keyword id="KW-1185">Reference proteome</keyword>